<keyword id="KW-0274">FAD</keyword>
<keyword id="KW-0285">Flavoprotein</keyword>
<keyword id="KW-0472">Membrane</keyword>
<keyword id="KW-0496">Mitochondrion</keyword>
<keyword id="KW-1000">Mitochondrion outer membrane</keyword>
<keyword id="KW-0520">NAD</keyword>
<keyword id="KW-0560">Oxidoreductase</keyword>
<keyword id="KW-1185">Reference proteome</keyword>
<keyword id="KW-0808">Transferase</keyword>
<keyword id="KW-0812">Transmembrane</keyword>
<keyword id="KW-1133">Transmembrane helix</keyword>
<feature type="chain" id="PRO_0000330144" description="NADH-cytochrome b5 reductase 1">
    <location>
        <begin position="1"/>
        <end position="309"/>
    </location>
</feature>
<feature type="transmembrane region" description="Helical" evidence="3">
    <location>
        <begin position="29"/>
        <end position="49"/>
    </location>
</feature>
<feature type="domain" description="FAD-binding FR-type" evidence="4">
    <location>
        <begin position="60"/>
        <end position="165"/>
    </location>
</feature>
<feature type="binding site" evidence="1">
    <location>
        <begin position="145"/>
        <end position="160"/>
    </location>
    <ligand>
        <name>FAD</name>
        <dbReference type="ChEBI" id="CHEBI:57692"/>
    </ligand>
</feature>
<feature type="binding site" evidence="1">
    <location>
        <begin position="171"/>
        <end position="208"/>
    </location>
    <ligand>
        <name>FAD</name>
        <dbReference type="ChEBI" id="CHEBI:57692"/>
    </ligand>
</feature>
<evidence type="ECO:0000250" key="1"/>
<evidence type="ECO:0000250" key="2">
    <source>
        <dbReference type="UniProtKB" id="P38626"/>
    </source>
</evidence>
<evidence type="ECO:0000255" key="3"/>
<evidence type="ECO:0000255" key="4">
    <source>
        <dbReference type="PROSITE-ProRule" id="PRU00716"/>
    </source>
</evidence>
<evidence type="ECO:0000305" key="5"/>
<name>NCB5R_ASPCL</name>
<accession>A1C7E9</accession>
<reference key="1">
    <citation type="journal article" date="2008" name="PLoS Genet.">
        <title>Genomic islands in the pathogenic filamentous fungus Aspergillus fumigatus.</title>
        <authorList>
            <person name="Fedorova N.D."/>
            <person name="Khaldi N."/>
            <person name="Joardar V.S."/>
            <person name="Maiti R."/>
            <person name="Amedeo P."/>
            <person name="Anderson M.J."/>
            <person name="Crabtree J."/>
            <person name="Silva J.C."/>
            <person name="Badger J.H."/>
            <person name="Albarraq A."/>
            <person name="Angiuoli S."/>
            <person name="Bussey H."/>
            <person name="Bowyer P."/>
            <person name="Cotty P.J."/>
            <person name="Dyer P.S."/>
            <person name="Egan A."/>
            <person name="Galens K."/>
            <person name="Fraser-Liggett C.M."/>
            <person name="Haas B.J."/>
            <person name="Inman J.M."/>
            <person name="Kent R."/>
            <person name="Lemieux S."/>
            <person name="Malavazi I."/>
            <person name="Orvis J."/>
            <person name="Roemer T."/>
            <person name="Ronning C.M."/>
            <person name="Sundaram J.P."/>
            <person name="Sutton G."/>
            <person name="Turner G."/>
            <person name="Venter J.C."/>
            <person name="White O.R."/>
            <person name="Whitty B.R."/>
            <person name="Youngman P."/>
            <person name="Wolfe K.H."/>
            <person name="Goldman G.H."/>
            <person name="Wortman J.R."/>
            <person name="Jiang B."/>
            <person name="Denning D.W."/>
            <person name="Nierman W.C."/>
        </authorList>
    </citation>
    <scope>NUCLEOTIDE SEQUENCE [LARGE SCALE GENOMIC DNA]</scope>
    <source>
        <strain>ATCC 1007 / CBS 513.65 / DSM 816 / NCTC 3887 / NRRL 1 / QM 1276 / 107</strain>
    </source>
</reference>
<dbReference type="EC" id="1.6.2.2" evidence="2"/>
<dbReference type="EMBL" id="DS027045">
    <property type="protein sequence ID" value="EAW14320.1"/>
    <property type="molecule type" value="Genomic_DNA"/>
</dbReference>
<dbReference type="RefSeq" id="XP_001275746.1">
    <property type="nucleotide sequence ID" value="XM_001275745.1"/>
</dbReference>
<dbReference type="SMR" id="A1C7E9"/>
<dbReference type="STRING" id="344612.A1C7E9"/>
<dbReference type="EnsemblFungi" id="EAW14320">
    <property type="protein sequence ID" value="EAW14320"/>
    <property type="gene ID" value="ACLA_073550"/>
</dbReference>
<dbReference type="GeneID" id="4707891"/>
<dbReference type="KEGG" id="act:ACLA_073550"/>
<dbReference type="VEuPathDB" id="FungiDB:ACLA_073550"/>
<dbReference type="eggNOG" id="KOG0534">
    <property type="taxonomic scope" value="Eukaryota"/>
</dbReference>
<dbReference type="HOGENOM" id="CLU_003827_9_0_1"/>
<dbReference type="OMA" id="VQIFMCG"/>
<dbReference type="OrthoDB" id="432685at2759"/>
<dbReference type="UniPathway" id="UPA00559"/>
<dbReference type="Proteomes" id="UP000006701">
    <property type="component" value="Unassembled WGS sequence"/>
</dbReference>
<dbReference type="GO" id="GO:0005783">
    <property type="term" value="C:endoplasmic reticulum"/>
    <property type="evidence" value="ECO:0007669"/>
    <property type="project" value="TreeGrafter"/>
</dbReference>
<dbReference type="GO" id="GO:0005741">
    <property type="term" value="C:mitochondrial outer membrane"/>
    <property type="evidence" value="ECO:0007669"/>
    <property type="project" value="UniProtKB-SubCell"/>
</dbReference>
<dbReference type="GO" id="GO:0004128">
    <property type="term" value="F:cytochrome-b5 reductase activity, acting on NAD(P)H"/>
    <property type="evidence" value="ECO:0000250"/>
    <property type="project" value="UniProtKB"/>
</dbReference>
<dbReference type="GO" id="GO:0003954">
    <property type="term" value="F:NADH dehydrogenase activity"/>
    <property type="evidence" value="ECO:0000250"/>
    <property type="project" value="UniProtKB"/>
</dbReference>
<dbReference type="GO" id="GO:0016740">
    <property type="term" value="F:transferase activity"/>
    <property type="evidence" value="ECO:0007669"/>
    <property type="project" value="UniProtKB-KW"/>
</dbReference>
<dbReference type="GO" id="GO:0017183">
    <property type="term" value="P:protein histidyl modification to diphthamide"/>
    <property type="evidence" value="ECO:0000250"/>
    <property type="project" value="UniProtKB"/>
</dbReference>
<dbReference type="GO" id="GO:0002926">
    <property type="term" value="P:tRNA wobble base 5-methoxycarbonylmethyl-2-thiouridinylation"/>
    <property type="evidence" value="ECO:0000250"/>
    <property type="project" value="UniProtKB"/>
</dbReference>
<dbReference type="CDD" id="cd06183">
    <property type="entry name" value="cyt_b5_reduct_like"/>
    <property type="match status" value="1"/>
</dbReference>
<dbReference type="FunFam" id="2.40.30.10:FF:000032">
    <property type="entry name" value="NADH-cytochrome b5 reductase"/>
    <property type="match status" value="1"/>
</dbReference>
<dbReference type="FunFam" id="3.40.50.80:FF:000019">
    <property type="entry name" value="NADH-cytochrome b5 reductase"/>
    <property type="match status" value="1"/>
</dbReference>
<dbReference type="Gene3D" id="3.40.50.80">
    <property type="entry name" value="Nucleotide-binding domain of ferredoxin-NADP reductase (FNR) module"/>
    <property type="match status" value="1"/>
</dbReference>
<dbReference type="Gene3D" id="2.40.30.10">
    <property type="entry name" value="Translation factors"/>
    <property type="match status" value="1"/>
</dbReference>
<dbReference type="InterPro" id="IPR001834">
    <property type="entry name" value="CBR-like"/>
</dbReference>
<dbReference type="InterPro" id="IPR008333">
    <property type="entry name" value="Cbr1-like_FAD-bd_dom"/>
</dbReference>
<dbReference type="InterPro" id="IPR017927">
    <property type="entry name" value="FAD-bd_FR_type"/>
</dbReference>
<dbReference type="InterPro" id="IPR001709">
    <property type="entry name" value="Flavoprot_Pyr_Nucl_cyt_Rdtase"/>
</dbReference>
<dbReference type="InterPro" id="IPR039261">
    <property type="entry name" value="FNR_nucleotide-bd"/>
</dbReference>
<dbReference type="InterPro" id="IPR001433">
    <property type="entry name" value="OxRdtase_FAD/NAD-bd"/>
</dbReference>
<dbReference type="InterPro" id="IPR017938">
    <property type="entry name" value="Riboflavin_synthase-like_b-brl"/>
</dbReference>
<dbReference type="PANTHER" id="PTHR19370">
    <property type="entry name" value="NADH-CYTOCHROME B5 REDUCTASE"/>
    <property type="match status" value="1"/>
</dbReference>
<dbReference type="PANTHER" id="PTHR19370:SF184">
    <property type="entry name" value="NADH-CYTOCHROME B5 REDUCTASE-LIKE"/>
    <property type="match status" value="1"/>
</dbReference>
<dbReference type="Pfam" id="PF00970">
    <property type="entry name" value="FAD_binding_6"/>
    <property type="match status" value="1"/>
</dbReference>
<dbReference type="Pfam" id="PF00175">
    <property type="entry name" value="NAD_binding_1"/>
    <property type="match status" value="1"/>
</dbReference>
<dbReference type="PRINTS" id="PR00406">
    <property type="entry name" value="CYTB5RDTASE"/>
</dbReference>
<dbReference type="PRINTS" id="PR00371">
    <property type="entry name" value="FPNCR"/>
</dbReference>
<dbReference type="SUPFAM" id="SSF52343">
    <property type="entry name" value="Ferredoxin reductase-like, C-terminal NADP-linked domain"/>
    <property type="match status" value="1"/>
</dbReference>
<dbReference type="SUPFAM" id="SSF63380">
    <property type="entry name" value="Riboflavin synthase domain-like"/>
    <property type="match status" value="1"/>
</dbReference>
<dbReference type="PROSITE" id="PS51384">
    <property type="entry name" value="FAD_FR"/>
    <property type="match status" value="1"/>
</dbReference>
<organism>
    <name type="scientific">Aspergillus clavatus (strain ATCC 1007 / CBS 513.65 / DSM 816 / NCTC 3887 / NRRL 1 / QM 1276 / 107)</name>
    <dbReference type="NCBI Taxonomy" id="344612"/>
    <lineage>
        <taxon>Eukaryota</taxon>
        <taxon>Fungi</taxon>
        <taxon>Dikarya</taxon>
        <taxon>Ascomycota</taxon>
        <taxon>Pezizomycotina</taxon>
        <taxon>Eurotiomycetes</taxon>
        <taxon>Eurotiomycetidae</taxon>
        <taxon>Eurotiales</taxon>
        <taxon>Aspergillaceae</taxon>
        <taxon>Aspergillus</taxon>
        <taxon>Aspergillus subgen. Fumigati</taxon>
    </lineage>
</organism>
<proteinExistence type="inferred from homology"/>
<sequence length="309" mass="33772">MSALSSENVNGVYIPSALLVFGTFLVKKEFVPYAVALTAVLAGFKLFTGDSKARKVLNPTEFQEFVLKEKTDISHNVSIYRFALPRPTDILGLPIGQHISLAATIEGQPKEVVRSYTPISSDNEAGYFDLLVKAYPQGNISKHLTTLKVGDVMKVRGPKGAMVYTPNMCRHIGMIAGGTGITPMLQVIKAIIRNRPRNGGTDITKVDLIFANVNPEDILLKEELDKLAAEDEDFNIYYVLNNPPQGWTGGVGFVTPEMIKERLPAPASDVKVLLCGPPPMISAMKKATESLGFTKARPVSKLEDQVFCF</sequence>
<gene>
    <name type="primary">cbr1</name>
    <name type="ORF">ACLA_073550</name>
</gene>
<protein>
    <recommendedName>
        <fullName>NADH-cytochrome b5 reductase 1</fullName>
        <ecNumber evidence="2">1.6.2.2</ecNumber>
    </recommendedName>
    <alternativeName>
        <fullName>Microsomal cytochrome b reductase</fullName>
    </alternativeName>
</protein>
<comment type="function">
    <text evidence="2">NADH-dependent reductase for dph3 and cytochrome b5. Required for the first step of diphthamide biosynthesis, a post-translational modification of histidine which occurs in elongation factor 2. Dph1 and dph2 transfer a 3-amino-3-carboxypropyl (ACP) group from S-adenosyl-L-methionine (SAM) to a histidine residue, the reaction is assisted by a reduction system comprising dph3 and a NADH-dependent reductase, predominantly cbr1. By reducing dph3, also involved in the formation of the tRNA wobble base modification mcm5s 2U (5-methoxycarbonylmethyl-2-thiouridine), mediated by the elongator complex. The cytochrome b5/NADH cytochrome b5 reductase electron transfer system supports the catalytic activity of several sterol biosynthetic enzymes.</text>
</comment>
<comment type="catalytic activity">
    <reaction evidence="2">
        <text>2 Fe(III)-[cytochrome b5] + NADH = 2 Fe(II)-[cytochrome b5] + NAD(+) + H(+)</text>
        <dbReference type="Rhea" id="RHEA:46680"/>
        <dbReference type="Rhea" id="RHEA-COMP:10438"/>
        <dbReference type="Rhea" id="RHEA-COMP:10439"/>
        <dbReference type="ChEBI" id="CHEBI:15378"/>
        <dbReference type="ChEBI" id="CHEBI:29033"/>
        <dbReference type="ChEBI" id="CHEBI:29034"/>
        <dbReference type="ChEBI" id="CHEBI:57540"/>
        <dbReference type="ChEBI" id="CHEBI:57945"/>
        <dbReference type="EC" id="1.6.2.2"/>
    </reaction>
</comment>
<comment type="catalytic activity">
    <reaction evidence="2">
        <text>2 Fe(3+)-[Dph3] + NADH = 2 Fe(2+)-[Dph3] + NAD(+) + H(+)</text>
        <dbReference type="Rhea" id="RHEA:71231"/>
        <dbReference type="Rhea" id="RHEA-COMP:18002"/>
        <dbReference type="Rhea" id="RHEA-COMP:18003"/>
        <dbReference type="ChEBI" id="CHEBI:15378"/>
        <dbReference type="ChEBI" id="CHEBI:29033"/>
        <dbReference type="ChEBI" id="CHEBI:29034"/>
        <dbReference type="ChEBI" id="CHEBI:57540"/>
        <dbReference type="ChEBI" id="CHEBI:57945"/>
        <dbReference type="ChEBI" id="CHEBI:83228"/>
    </reaction>
    <physiologicalReaction direction="left-to-right" evidence="2">
        <dbReference type="Rhea" id="RHEA:71232"/>
    </physiologicalReaction>
</comment>
<comment type="cofactor">
    <cofactor evidence="3">
        <name>FAD</name>
        <dbReference type="ChEBI" id="CHEBI:57692"/>
    </cofactor>
</comment>
<comment type="pathway">
    <text evidence="2">Protein modification; peptidyl-diphthamide biosynthesis.</text>
</comment>
<comment type="subunit">
    <text evidence="2">Monomer. Component of the 2-(3-amino-3-carboxypropyl)histidine synthase complex composed of dph1, dph2, dph3 and a NADH-dependent reductase, predominantly cbr1.</text>
</comment>
<comment type="subcellular location">
    <subcellularLocation>
        <location evidence="2">Mitochondrion outer membrane</location>
        <topology evidence="3">Single-pass membrane protein</topology>
    </subcellularLocation>
</comment>
<comment type="similarity">
    <text evidence="5">Belongs to the flavoprotein pyridine nucleotide cytochrome reductase family.</text>
</comment>